<gene>
    <name evidence="1" type="primary">ctaB</name>
    <name type="ordered locus">BMEI1464</name>
</gene>
<dbReference type="EC" id="2.5.1.141" evidence="1"/>
<dbReference type="EMBL" id="AE008917">
    <property type="protein sequence ID" value="AAL52645.1"/>
    <property type="status" value="ALT_INIT"/>
    <property type="molecule type" value="Genomic_DNA"/>
</dbReference>
<dbReference type="PIR" id="AB3435">
    <property type="entry name" value="AB3435"/>
</dbReference>
<dbReference type="SMR" id="P67053"/>
<dbReference type="KEGG" id="bme:BMEI1464"/>
<dbReference type="eggNOG" id="COG0109">
    <property type="taxonomic scope" value="Bacteria"/>
</dbReference>
<dbReference type="UniPathway" id="UPA00834">
    <property type="reaction ID" value="UER00712"/>
</dbReference>
<dbReference type="Proteomes" id="UP000000419">
    <property type="component" value="Chromosome I"/>
</dbReference>
<dbReference type="GO" id="GO:0005886">
    <property type="term" value="C:plasma membrane"/>
    <property type="evidence" value="ECO:0007669"/>
    <property type="project" value="UniProtKB-SubCell"/>
</dbReference>
<dbReference type="GO" id="GO:0008495">
    <property type="term" value="F:protoheme IX farnesyltransferase activity"/>
    <property type="evidence" value="ECO:0007669"/>
    <property type="project" value="UniProtKB-UniRule"/>
</dbReference>
<dbReference type="GO" id="GO:0048034">
    <property type="term" value="P:heme O biosynthetic process"/>
    <property type="evidence" value="ECO:0007669"/>
    <property type="project" value="UniProtKB-UniRule"/>
</dbReference>
<dbReference type="CDD" id="cd13957">
    <property type="entry name" value="PT_UbiA_Cox10"/>
    <property type="match status" value="1"/>
</dbReference>
<dbReference type="FunFam" id="1.10.357.140:FF:000001">
    <property type="entry name" value="Protoheme IX farnesyltransferase"/>
    <property type="match status" value="1"/>
</dbReference>
<dbReference type="Gene3D" id="1.10.357.140">
    <property type="entry name" value="UbiA prenyltransferase"/>
    <property type="match status" value="1"/>
</dbReference>
<dbReference type="HAMAP" id="MF_00154">
    <property type="entry name" value="CyoE_CtaB"/>
    <property type="match status" value="1"/>
</dbReference>
<dbReference type="InterPro" id="IPR006369">
    <property type="entry name" value="Protohaem_IX_farnesylTrfase"/>
</dbReference>
<dbReference type="InterPro" id="IPR000537">
    <property type="entry name" value="UbiA_prenyltransferase"/>
</dbReference>
<dbReference type="InterPro" id="IPR030470">
    <property type="entry name" value="UbiA_prenylTrfase_CS"/>
</dbReference>
<dbReference type="InterPro" id="IPR044878">
    <property type="entry name" value="UbiA_sf"/>
</dbReference>
<dbReference type="NCBIfam" id="TIGR01473">
    <property type="entry name" value="cyoE_ctaB"/>
    <property type="match status" value="1"/>
</dbReference>
<dbReference type="NCBIfam" id="NF003349">
    <property type="entry name" value="PRK04375.1-2"/>
    <property type="match status" value="1"/>
</dbReference>
<dbReference type="PANTHER" id="PTHR43448:SF7">
    <property type="entry name" value="4-HYDROXYBENZOATE SOLANESYLTRANSFERASE"/>
    <property type="match status" value="1"/>
</dbReference>
<dbReference type="PANTHER" id="PTHR43448">
    <property type="entry name" value="PROTOHEME IX FARNESYLTRANSFERASE, MITOCHONDRIAL"/>
    <property type="match status" value="1"/>
</dbReference>
<dbReference type="Pfam" id="PF01040">
    <property type="entry name" value="UbiA"/>
    <property type="match status" value="1"/>
</dbReference>
<dbReference type="PROSITE" id="PS00943">
    <property type="entry name" value="UBIA"/>
    <property type="match status" value="1"/>
</dbReference>
<proteinExistence type="inferred from homology"/>
<feature type="chain" id="PRO_0000162906" description="Protoheme IX farnesyltransferase">
    <location>
        <begin position="1"/>
        <end position="312"/>
    </location>
</feature>
<feature type="transmembrane region" description="Helical" evidence="1">
    <location>
        <begin position="29"/>
        <end position="49"/>
    </location>
</feature>
<feature type="transmembrane region" description="Helical" evidence="1">
    <location>
        <begin position="50"/>
        <end position="70"/>
    </location>
</feature>
<feature type="transmembrane region" description="Helical" evidence="1">
    <location>
        <begin position="90"/>
        <end position="110"/>
    </location>
</feature>
<feature type="transmembrane region" description="Helical" evidence="1">
    <location>
        <begin position="117"/>
        <end position="137"/>
    </location>
</feature>
<feature type="transmembrane region" description="Helical" evidence="1">
    <location>
        <begin position="150"/>
        <end position="170"/>
    </location>
</feature>
<feature type="transmembrane region" description="Helical" evidence="1">
    <location>
        <begin position="177"/>
        <end position="197"/>
    </location>
</feature>
<feature type="transmembrane region" description="Helical" evidence="1">
    <location>
        <begin position="223"/>
        <end position="243"/>
    </location>
</feature>
<feature type="transmembrane region" description="Helical" evidence="1">
    <location>
        <begin position="246"/>
        <end position="266"/>
    </location>
</feature>
<feature type="transmembrane region" description="Helical" evidence="1">
    <location>
        <begin position="292"/>
        <end position="312"/>
    </location>
</feature>
<organism>
    <name type="scientific">Brucella melitensis biotype 1 (strain ATCC 23456 / CCUG 17765 / NCTC 10094 / 16M)</name>
    <dbReference type="NCBI Taxonomy" id="224914"/>
    <lineage>
        <taxon>Bacteria</taxon>
        <taxon>Pseudomonadati</taxon>
        <taxon>Pseudomonadota</taxon>
        <taxon>Alphaproteobacteria</taxon>
        <taxon>Hyphomicrobiales</taxon>
        <taxon>Brucellaceae</taxon>
        <taxon>Brucella/Ochrobactrum group</taxon>
        <taxon>Brucella</taxon>
    </lineage>
</organism>
<comment type="function">
    <text evidence="1">Converts heme B (protoheme IX) to heme O by substitution of the vinyl group on carbon 2 of heme B porphyrin ring with a hydroxyethyl farnesyl side group.</text>
</comment>
<comment type="catalytic activity">
    <reaction evidence="1">
        <text>heme b + (2E,6E)-farnesyl diphosphate + H2O = Fe(II)-heme o + diphosphate</text>
        <dbReference type="Rhea" id="RHEA:28070"/>
        <dbReference type="ChEBI" id="CHEBI:15377"/>
        <dbReference type="ChEBI" id="CHEBI:33019"/>
        <dbReference type="ChEBI" id="CHEBI:60344"/>
        <dbReference type="ChEBI" id="CHEBI:60530"/>
        <dbReference type="ChEBI" id="CHEBI:175763"/>
        <dbReference type="EC" id="2.5.1.141"/>
    </reaction>
</comment>
<comment type="pathway">
    <text evidence="1">Porphyrin-containing compound metabolism; heme O biosynthesis; heme O from protoheme: step 1/1.</text>
</comment>
<comment type="subcellular location">
    <subcellularLocation>
        <location evidence="1">Cell inner membrane</location>
        <topology evidence="1">Multi-pass membrane protein</topology>
    </subcellularLocation>
</comment>
<comment type="miscellaneous">
    <text evidence="1">Carbon 2 of the heme B porphyrin ring is defined according to the Fischer nomenclature.</text>
</comment>
<comment type="similarity">
    <text evidence="1">Belongs to the UbiA prenyltransferase family. Protoheme IX farnesyltransferase subfamily.</text>
</comment>
<comment type="sequence caution" evidence="2">
    <conflict type="erroneous initiation">
        <sequence resource="EMBL-CDS" id="AAL52645"/>
    </conflict>
</comment>
<protein>
    <recommendedName>
        <fullName evidence="1">Protoheme IX farnesyltransferase</fullName>
        <ecNumber evidence="1">2.5.1.141</ecNumber>
    </recommendedName>
    <alternativeName>
        <fullName evidence="1">Heme B farnesyltransferase</fullName>
    </alternativeName>
    <alternativeName>
        <fullName evidence="1">Heme O synthase</fullName>
    </alternativeName>
</protein>
<accession>P67053</accession>
<accession>Q8YFQ6</accession>
<name>COXX_BRUME</name>
<evidence type="ECO:0000255" key="1">
    <source>
        <dbReference type="HAMAP-Rule" id="MF_00154"/>
    </source>
</evidence>
<evidence type="ECO:0000305" key="2"/>
<sequence>MEKNTASEDAFALSEATARDYLVLLKPRVMSLVVFTGLVGLVLAPGHMNPVLAVISILCIAVGAGASGALNMWYDADIDAVMKRTRKRPIPAGIIAPNQVLAFGLTLSAFSVMTLGLMVNWLAAALLAFTIFFYAVIYTMWLKRSTPQNIVIGGAAGAFPPMIGWAAATGEITWDSLVLFMIIFLWTPPHFWALSLFTTNDYEAARIPMMPNVKGELSTRRQALFYAVLMAPVGVLPWVMGFAGMFYGVVSTLLGLAFVYYAWRLWAADSQPQMLAAARKLFRFSLLYLAGIFAVLLFEALTFKLLAAFGVF</sequence>
<reference key="1">
    <citation type="journal article" date="2002" name="Proc. Natl. Acad. Sci. U.S.A.">
        <title>The genome sequence of the facultative intracellular pathogen Brucella melitensis.</title>
        <authorList>
            <person name="DelVecchio V.G."/>
            <person name="Kapatral V."/>
            <person name="Redkar R.J."/>
            <person name="Patra G."/>
            <person name="Mujer C."/>
            <person name="Los T."/>
            <person name="Ivanova N."/>
            <person name="Anderson I."/>
            <person name="Bhattacharyya A."/>
            <person name="Lykidis A."/>
            <person name="Reznik G."/>
            <person name="Jablonski L."/>
            <person name="Larsen N."/>
            <person name="D'Souza M."/>
            <person name="Bernal A."/>
            <person name="Mazur M."/>
            <person name="Goltsman E."/>
            <person name="Selkov E."/>
            <person name="Elzer P.H."/>
            <person name="Hagius S."/>
            <person name="O'Callaghan D."/>
            <person name="Letesson J.-J."/>
            <person name="Haselkorn R."/>
            <person name="Kyrpides N.C."/>
            <person name="Overbeek R."/>
        </authorList>
    </citation>
    <scope>NUCLEOTIDE SEQUENCE [LARGE SCALE GENOMIC DNA]</scope>
    <source>
        <strain>ATCC 23456 / CCUG 17765 / NCTC 10094 / 16M</strain>
    </source>
</reference>
<keyword id="KW-0997">Cell inner membrane</keyword>
<keyword id="KW-1003">Cell membrane</keyword>
<keyword id="KW-0350">Heme biosynthesis</keyword>
<keyword id="KW-0472">Membrane</keyword>
<keyword id="KW-0808">Transferase</keyword>
<keyword id="KW-0812">Transmembrane</keyword>
<keyword id="KW-1133">Transmembrane helix</keyword>